<dbReference type="EMBL" id="CP001251">
    <property type="protein sequence ID" value="ACK42274.1"/>
    <property type="molecule type" value="Genomic_DNA"/>
</dbReference>
<dbReference type="RefSeq" id="YP_002352888.1">
    <property type="nucleotide sequence ID" value="NC_011661.1"/>
</dbReference>
<dbReference type="SMR" id="B8E1E6"/>
<dbReference type="FunCoup" id="B8E1E6">
    <property type="interactions" value="125"/>
</dbReference>
<dbReference type="STRING" id="515635.Dtur_0994"/>
<dbReference type="EnsemblBacteria" id="ACK42274">
    <property type="protein sequence ID" value="ACK42274"/>
    <property type="gene ID" value="Dtur_0994"/>
</dbReference>
<dbReference type="KEGG" id="dtu:Dtur_0994"/>
<dbReference type="PATRIC" id="fig|515635.4.peg.1031"/>
<dbReference type="eggNOG" id="COG0199">
    <property type="taxonomic scope" value="Bacteria"/>
</dbReference>
<dbReference type="HOGENOM" id="CLU_139869_3_0_0"/>
<dbReference type="InParanoid" id="B8E1E6"/>
<dbReference type="OrthoDB" id="9810484at2"/>
<dbReference type="Proteomes" id="UP000007719">
    <property type="component" value="Chromosome"/>
</dbReference>
<dbReference type="GO" id="GO:0005737">
    <property type="term" value="C:cytoplasm"/>
    <property type="evidence" value="ECO:0007669"/>
    <property type="project" value="UniProtKB-ARBA"/>
</dbReference>
<dbReference type="GO" id="GO:0015935">
    <property type="term" value="C:small ribosomal subunit"/>
    <property type="evidence" value="ECO:0000318"/>
    <property type="project" value="GO_Central"/>
</dbReference>
<dbReference type="GO" id="GO:0019843">
    <property type="term" value="F:rRNA binding"/>
    <property type="evidence" value="ECO:0007669"/>
    <property type="project" value="UniProtKB-UniRule"/>
</dbReference>
<dbReference type="GO" id="GO:0003735">
    <property type="term" value="F:structural constituent of ribosome"/>
    <property type="evidence" value="ECO:0000318"/>
    <property type="project" value="GO_Central"/>
</dbReference>
<dbReference type="GO" id="GO:0008270">
    <property type="term" value="F:zinc ion binding"/>
    <property type="evidence" value="ECO:0007669"/>
    <property type="project" value="UniProtKB-UniRule"/>
</dbReference>
<dbReference type="GO" id="GO:0006412">
    <property type="term" value="P:translation"/>
    <property type="evidence" value="ECO:0000318"/>
    <property type="project" value="GO_Central"/>
</dbReference>
<dbReference type="FunFam" id="4.10.830.10:FF:000001">
    <property type="entry name" value="30S ribosomal protein S14 type Z"/>
    <property type="match status" value="1"/>
</dbReference>
<dbReference type="Gene3D" id="4.10.830.10">
    <property type="entry name" value="30s Ribosomal Protein S14, Chain N"/>
    <property type="match status" value="1"/>
</dbReference>
<dbReference type="HAMAP" id="MF_01364_B">
    <property type="entry name" value="Ribosomal_uS14_2_B"/>
    <property type="match status" value="1"/>
</dbReference>
<dbReference type="InterPro" id="IPR001209">
    <property type="entry name" value="Ribosomal_uS14"/>
</dbReference>
<dbReference type="InterPro" id="IPR023053">
    <property type="entry name" value="Ribosomal_uS14_bact"/>
</dbReference>
<dbReference type="InterPro" id="IPR018271">
    <property type="entry name" value="Ribosomal_uS14_CS"/>
</dbReference>
<dbReference type="InterPro" id="IPR043140">
    <property type="entry name" value="Ribosomal_uS14_sf"/>
</dbReference>
<dbReference type="NCBIfam" id="NF005974">
    <property type="entry name" value="PRK08061.1"/>
    <property type="match status" value="1"/>
</dbReference>
<dbReference type="PANTHER" id="PTHR19836">
    <property type="entry name" value="30S RIBOSOMAL PROTEIN S14"/>
    <property type="match status" value="1"/>
</dbReference>
<dbReference type="PANTHER" id="PTHR19836:SF19">
    <property type="entry name" value="SMALL RIBOSOMAL SUBUNIT PROTEIN US14M"/>
    <property type="match status" value="1"/>
</dbReference>
<dbReference type="Pfam" id="PF00253">
    <property type="entry name" value="Ribosomal_S14"/>
    <property type="match status" value="1"/>
</dbReference>
<dbReference type="SUPFAM" id="SSF57716">
    <property type="entry name" value="Glucocorticoid receptor-like (DNA-binding domain)"/>
    <property type="match status" value="1"/>
</dbReference>
<dbReference type="PROSITE" id="PS00527">
    <property type="entry name" value="RIBOSOMAL_S14"/>
    <property type="match status" value="1"/>
</dbReference>
<organism>
    <name type="scientific">Dictyoglomus turgidum (strain DSM 6724 / Z-1310)</name>
    <dbReference type="NCBI Taxonomy" id="515635"/>
    <lineage>
        <taxon>Bacteria</taxon>
        <taxon>Pseudomonadati</taxon>
        <taxon>Dictyoglomota</taxon>
        <taxon>Dictyoglomia</taxon>
        <taxon>Dictyoglomales</taxon>
        <taxon>Dictyoglomaceae</taxon>
        <taxon>Dictyoglomus</taxon>
    </lineage>
</organism>
<feature type="chain" id="PRO_1000143900" description="Small ribosomal subunit protein uS14">
    <location>
        <begin position="1"/>
        <end position="61"/>
    </location>
</feature>
<feature type="binding site" evidence="1">
    <location>
        <position position="24"/>
    </location>
    <ligand>
        <name>Zn(2+)</name>
        <dbReference type="ChEBI" id="CHEBI:29105"/>
    </ligand>
</feature>
<feature type="binding site" evidence="1">
    <location>
        <position position="27"/>
    </location>
    <ligand>
        <name>Zn(2+)</name>
        <dbReference type="ChEBI" id="CHEBI:29105"/>
    </ligand>
</feature>
<feature type="binding site" evidence="1">
    <location>
        <position position="40"/>
    </location>
    <ligand>
        <name>Zn(2+)</name>
        <dbReference type="ChEBI" id="CHEBI:29105"/>
    </ligand>
</feature>
<feature type="binding site" evidence="1">
    <location>
        <position position="43"/>
    </location>
    <ligand>
        <name>Zn(2+)</name>
        <dbReference type="ChEBI" id="CHEBI:29105"/>
    </ligand>
</feature>
<proteinExistence type="inferred from homology"/>
<comment type="function">
    <text evidence="1">Binds 16S rRNA, required for the assembly of 30S particles and may also be responsible for determining the conformation of the 16S rRNA at the A site.</text>
</comment>
<comment type="cofactor">
    <cofactor evidence="1">
        <name>Zn(2+)</name>
        <dbReference type="ChEBI" id="CHEBI:29105"/>
    </cofactor>
    <text evidence="1">Binds 1 zinc ion per subunit.</text>
</comment>
<comment type="subunit">
    <text evidence="1">Part of the 30S ribosomal subunit. Contacts proteins S3 and S10.</text>
</comment>
<comment type="similarity">
    <text evidence="1">Belongs to the universal ribosomal protein uS14 family. Zinc-binding uS14 subfamily.</text>
</comment>
<reference key="1">
    <citation type="journal article" date="2016" name="Front. Microbiol.">
        <title>The complete genome sequence of hyperthermophile Dictyoglomus turgidum DSM 6724 reveals a specialized carbohydrate fermentor.</title>
        <authorList>
            <person name="Brumm P.J."/>
            <person name="Gowda K."/>
            <person name="Robb F.T."/>
            <person name="Mead D.A."/>
        </authorList>
    </citation>
    <scope>NUCLEOTIDE SEQUENCE [LARGE SCALE GENOMIC DNA]</scope>
    <source>
        <strain>DSM 6724 / Z-1310</strain>
    </source>
</reference>
<keyword id="KW-0479">Metal-binding</keyword>
<keyword id="KW-1185">Reference proteome</keyword>
<keyword id="KW-0687">Ribonucleoprotein</keyword>
<keyword id="KW-0689">Ribosomal protein</keyword>
<keyword id="KW-0694">RNA-binding</keyword>
<keyword id="KW-0699">rRNA-binding</keyword>
<keyword id="KW-0862">Zinc</keyword>
<accession>B8E1E6</accession>
<name>RS14Z_DICTD</name>
<evidence type="ECO:0000255" key="1">
    <source>
        <dbReference type="HAMAP-Rule" id="MF_01364"/>
    </source>
</evidence>
<evidence type="ECO:0000305" key="2"/>
<sequence>MAKKSQIVKWLKPKKYKVREYNRCRICGRPRGYIRKFGLCRLCFRELALKGEIPGVRKASW</sequence>
<protein>
    <recommendedName>
        <fullName evidence="1">Small ribosomal subunit protein uS14</fullName>
    </recommendedName>
    <alternativeName>
        <fullName evidence="2">30S ribosomal protein S14 type Z</fullName>
    </alternativeName>
</protein>
<gene>
    <name evidence="1" type="primary">rpsZ</name>
    <name evidence="1" type="synonym">rpsN</name>
    <name type="ordered locus">Dtur_0994</name>
</gene>